<reference key="1">
    <citation type="journal article" date="2005" name="Nature">
        <title>Genome sequencing and analysis of Aspergillus oryzae.</title>
        <authorList>
            <person name="Machida M."/>
            <person name="Asai K."/>
            <person name="Sano M."/>
            <person name="Tanaka T."/>
            <person name="Kumagai T."/>
            <person name="Terai G."/>
            <person name="Kusumoto K."/>
            <person name="Arima T."/>
            <person name="Akita O."/>
            <person name="Kashiwagi Y."/>
            <person name="Abe K."/>
            <person name="Gomi K."/>
            <person name="Horiuchi H."/>
            <person name="Kitamoto K."/>
            <person name="Kobayashi T."/>
            <person name="Takeuchi M."/>
            <person name="Denning D.W."/>
            <person name="Galagan J.E."/>
            <person name="Nierman W.C."/>
            <person name="Yu J."/>
            <person name="Archer D.B."/>
            <person name="Bennett J.W."/>
            <person name="Bhatnagar D."/>
            <person name="Cleveland T.E."/>
            <person name="Fedorova N.D."/>
            <person name="Gotoh O."/>
            <person name="Horikawa H."/>
            <person name="Hosoyama A."/>
            <person name="Ichinomiya M."/>
            <person name="Igarashi R."/>
            <person name="Iwashita K."/>
            <person name="Juvvadi P.R."/>
            <person name="Kato M."/>
            <person name="Kato Y."/>
            <person name="Kin T."/>
            <person name="Kokubun A."/>
            <person name="Maeda H."/>
            <person name="Maeyama N."/>
            <person name="Maruyama J."/>
            <person name="Nagasaki H."/>
            <person name="Nakajima T."/>
            <person name="Oda K."/>
            <person name="Okada K."/>
            <person name="Paulsen I."/>
            <person name="Sakamoto K."/>
            <person name="Sawano T."/>
            <person name="Takahashi M."/>
            <person name="Takase K."/>
            <person name="Terabayashi Y."/>
            <person name="Wortman J.R."/>
            <person name="Yamada O."/>
            <person name="Yamagata Y."/>
            <person name="Anazawa H."/>
            <person name="Hata Y."/>
            <person name="Koide Y."/>
            <person name="Komori T."/>
            <person name="Koyama Y."/>
            <person name="Minetoki T."/>
            <person name="Suharnan S."/>
            <person name="Tanaka A."/>
            <person name="Isono K."/>
            <person name="Kuhara S."/>
            <person name="Ogasawara N."/>
            <person name="Kikuchi H."/>
        </authorList>
    </citation>
    <scope>NUCLEOTIDE SEQUENCE [LARGE SCALE GENOMIC DNA]</scope>
    <source>
        <strain>ATCC 42149 / RIB 40</strain>
    </source>
</reference>
<reference key="2">
    <citation type="journal article" date="2014" name="Angew. Chem. Int. Ed.">
        <title>Biosynthesis of the halogenated mycotoxin aspirochlorine in koji mold involves a cryptic amino acid conversion.</title>
        <authorList>
            <person name="Chankhamjon P."/>
            <person name="Boettger-Schmidt D."/>
            <person name="Scherlach K."/>
            <person name="Urbansky B."/>
            <person name="Lackner G."/>
            <person name="Kalb D."/>
            <person name="Dahse H.M."/>
            <person name="Hoffmeister D."/>
            <person name="Hertweck C."/>
        </authorList>
    </citation>
    <scope>FUNCTION</scope>
    <scope>PATHWAY</scope>
</reference>
<accession>Q2UPA6</accession>
<organism>
    <name type="scientific">Aspergillus oryzae (strain ATCC 42149 / RIB 40)</name>
    <name type="common">Yellow koji mold</name>
    <dbReference type="NCBI Taxonomy" id="510516"/>
    <lineage>
        <taxon>Eukaryota</taxon>
        <taxon>Fungi</taxon>
        <taxon>Dikarya</taxon>
        <taxon>Ascomycota</taxon>
        <taxon>Pezizomycotina</taxon>
        <taxon>Eurotiomycetes</taxon>
        <taxon>Eurotiomycetidae</taxon>
        <taxon>Eurotiales</taxon>
        <taxon>Aspergillaceae</taxon>
        <taxon>Aspergillus</taxon>
        <taxon>Aspergillus subgen. Circumdati</taxon>
    </lineage>
</organism>
<evidence type="ECO:0000255" key="1">
    <source>
        <dbReference type="PROSITE-ProRule" id="PRU01020"/>
    </source>
</evidence>
<evidence type="ECO:0000269" key="2">
    <source>
    </source>
</evidence>
<evidence type="ECO:0000303" key="3">
    <source>
    </source>
</evidence>
<evidence type="ECO:0000305" key="4">
    <source>
    </source>
</evidence>
<keyword id="KW-0489">Methyltransferase</keyword>
<keyword id="KW-1185">Reference proteome</keyword>
<keyword id="KW-0949">S-adenosyl-L-methionine</keyword>
<keyword id="KW-0808">Transferase</keyword>
<sequence length="473" mass="52856">MNDYIRVNCTELRWPELVCAEPGSNSRGHSPPFHIANASITQLKAIDLLFLIDFSISKIMESLLQLETALRAVVEETKRPNAAAAFASLRRADPNNDPALTAVASRVVDLASEVTQLLEPAYLALADHLFGYQHTQCLAAVVELRIPDYLASGPQTFEQLSISSGTRRDRLRQVLRLLYNNGVFSYDAESDSVRNNEASEMLKQDHWTQWHRWASVCSKQFYQMAQGLPRAMSAGVTRSPAQVHYDTDESMFSYLERNGTMVQLRECMGAAAIAQTPGMITGYPWAELSNHTLFDLGGGDGSLIAGLLRAIPTLQGGIMDTPRVLPFLQEAFHHPSSKYADVALRIPPERVIAGDFLQEVIPSEAYVMRWCLHDWNDEQACQILRNIRRSIINSPVSRLIVLESVLADGRWGRMSRLGDINVMVTAEHGQERTETQWRQLAACTGWKVVSITQLPGAWPSAIDMRPVERPENV</sequence>
<name>ACLU_ASPOR</name>
<protein>
    <recommendedName>
        <fullName evidence="3">O-methyltransferase aclU</fullName>
        <ecNumber evidence="1">2.1.1.-</ecNumber>
    </recommendedName>
    <alternativeName>
        <fullName evidence="3">Aspirochlorine biosynthesis protein U</fullName>
    </alternativeName>
</protein>
<feature type="chain" id="PRO_0000441200" description="O-methyltransferase aclU">
    <location>
        <begin position="1"/>
        <end position="473"/>
    </location>
</feature>
<feature type="active site" description="Proton acceptor" evidence="1">
    <location>
        <position position="373"/>
    </location>
</feature>
<feature type="binding site" evidence="1">
    <location>
        <position position="320"/>
    </location>
    <ligand>
        <name>S-adenosyl-L-methionine</name>
        <dbReference type="ChEBI" id="CHEBI:59789"/>
    </ligand>
</feature>
<feature type="binding site" evidence="1">
    <location>
        <begin position="354"/>
        <end position="356"/>
    </location>
    <ligand>
        <name>S-adenosyl-L-methionine</name>
        <dbReference type="ChEBI" id="CHEBI:59789"/>
    </ligand>
</feature>
<gene>
    <name evidence="3" type="primary">aclU</name>
    <name type="ORF">AO090001000046</name>
</gene>
<proteinExistence type="inferred from homology"/>
<comment type="function">
    <text evidence="2">O-methyltransferase; part of the gene cluster that mediates the biosynthesis of aspirochlorine (or antibiotic A30641), an unusual halogenated spiro compound with distinctive antifungal properties due to selective inhibition of protein biosynthesis, and which is also active against bacteria, viruses, and murine tumor cells (PubMed:25302411). The non-ribosomal peptide synthetase (NRPS) aclP is responsible the formation of the diketopiperazine (DKP) core from the condensation of 2 phenylalanine residues (PubMed:25302411). One Phe residue is tailored into chlorotyrosine by hydroxylation and chlorination, whereas the second Phe undergoes an unprecedented C-C bond cleavage to be converted into glycine (PubMed:25302411). After formation of the DKP, sulfur is incorporated into the DKP by conjugation with glutathione by aclG, followed by its stepwise degradation to the thiol by aclI, aclJ and aclK, and the dithiol oxidation by aclT (PubMed:25302411). In addition, oxygenases (aclB, aclC, aclL and aclO) and O-methyltransferases (aclM and aclU) act as tailoring enzymes to produce the intermediate dechloroaspirochlorine (PubMed:25302411). Ultimately, chlorination of dechloroaspirochlorine by the halogenase aclH is the last step in the aspirochlorine pathway (PubMed:25302411).</text>
</comment>
<comment type="pathway">
    <text evidence="4">Mycotoxin biosynthesis.</text>
</comment>
<comment type="similarity">
    <text evidence="1">Belongs to the class I-like SAM-binding methyltransferase superfamily. Cation-independent O-methyltransferase family. COMT subfamily.</text>
</comment>
<dbReference type="EC" id="2.1.1.-" evidence="1"/>
<dbReference type="EMBL" id="BA000050">
    <property type="protein sequence ID" value="BAE56609.1"/>
    <property type="molecule type" value="Genomic_DNA"/>
</dbReference>
<dbReference type="SMR" id="Q2UPA6"/>
<dbReference type="STRING" id="510516.Q2UPA6"/>
<dbReference type="EnsemblFungi" id="BAE56609">
    <property type="protein sequence ID" value="BAE56609"/>
    <property type="gene ID" value="AO090001000046"/>
</dbReference>
<dbReference type="VEuPathDB" id="FungiDB:AO090001000046"/>
<dbReference type="HOGENOM" id="CLU_005533_12_2_1"/>
<dbReference type="OMA" id="DHLFAYQ"/>
<dbReference type="Proteomes" id="UP000006564">
    <property type="component" value="Chromosome 2"/>
</dbReference>
<dbReference type="GO" id="GO:0008171">
    <property type="term" value="F:O-methyltransferase activity"/>
    <property type="evidence" value="ECO:0007669"/>
    <property type="project" value="InterPro"/>
</dbReference>
<dbReference type="GO" id="GO:0046983">
    <property type="term" value="F:protein dimerization activity"/>
    <property type="evidence" value="ECO:0007669"/>
    <property type="project" value="InterPro"/>
</dbReference>
<dbReference type="GO" id="GO:0032259">
    <property type="term" value="P:methylation"/>
    <property type="evidence" value="ECO:0007669"/>
    <property type="project" value="UniProtKB-KW"/>
</dbReference>
<dbReference type="GO" id="GO:0044550">
    <property type="term" value="P:secondary metabolite biosynthetic process"/>
    <property type="evidence" value="ECO:0007669"/>
    <property type="project" value="UniProtKB-ARBA"/>
</dbReference>
<dbReference type="Gene3D" id="3.40.50.150">
    <property type="entry name" value="Vaccinia Virus protein VP39"/>
    <property type="match status" value="1"/>
</dbReference>
<dbReference type="Gene3D" id="1.10.10.10">
    <property type="entry name" value="Winged helix-like DNA-binding domain superfamily/Winged helix DNA-binding domain"/>
    <property type="match status" value="1"/>
</dbReference>
<dbReference type="InterPro" id="IPR016461">
    <property type="entry name" value="COMT-like"/>
</dbReference>
<dbReference type="InterPro" id="IPR001077">
    <property type="entry name" value="O_MeTrfase_dom"/>
</dbReference>
<dbReference type="InterPro" id="IPR012967">
    <property type="entry name" value="Plant_O-MeTrfase_dimerisation"/>
</dbReference>
<dbReference type="InterPro" id="IPR029063">
    <property type="entry name" value="SAM-dependent_MTases_sf"/>
</dbReference>
<dbReference type="InterPro" id="IPR036388">
    <property type="entry name" value="WH-like_DNA-bd_sf"/>
</dbReference>
<dbReference type="InterPro" id="IPR036390">
    <property type="entry name" value="WH_DNA-bd_sf"/>
</dbReference>
<dbReference type="PANTHER" id="PTHR43712:SF2">
    <property type="entry name" value="O-METHYLTRANSFERASE CICE"/>
    <property type="match status" value="1"/>
</dbReference>
<dbReference type="PANTHER" id="PTHR43712">
    <property type="entry name" value="PUTATIVE (AFU_ORTHOLOGUE AFUA_4G14580)-RELATED"/>
    <property type="match status" value="1"/>
</dbReference>
<dbReference type="Pfam" id="PF08100">
    <property type="entry name" value="Dimerisation"/>
    <property type="match status" value="1"/>
</dbReference>
<dbReference type="Pfam" id="PF00891">
    <property type="entry name" value="Methyltransf_2"/>
    <property type="match status" value="1"/>
</dbReference>
<dbReference type="SUPFAM" id="SSF53335">
    <property type="entry name" value="S-adenosyl-L-methionine-dependent methyltransferases"/>
    <property type="match status" value="1"/>
</dbReference>
<dbReference type="SUPFAM" id="SSF46785">
    <property type="entry name" value="Winged helix' DNA-binding domain"/>
    <property type="match status" value="1"/>
</dbReference>
<dbReference type="PROSITE" id="PS51683">
    <property type="entry name" value="SAM_OMT_II"/>
    <property type="match status" value="1"/>
</dbReference>